<evidence type="ECO:0000255" key="1">
    <source>
        <dbReference type="HAMAP-Rule" id="MF_00210"/>
    </source>
</evidence>
<feature type="chain" id="PRO_1000099733" description="3-phosphoshikimate 1-carboxyvinyltransferase">
    <location>
        <begin position="1"/>
        <end position="422"/>
    </location>
</feature>
<feature type="active site" description="Proton acceptor" evidence="1">
    <location>
        <position position="305"/>
    </location>
</feature>
<feature type="binding site" evidence="1">
    <location>
        <position position="20"/>
    </location>
    <ligand>
        <name>3-phosphoshikimate</name>
        <dbReference type="ChEBI" id="CHEBI:145989"/>
    </ligand>
</feature>
<feature type="binding site" evidence="1">
    <location>
        <position position="20"/>
    </location>
    <ligand>
        <name>phosphoenolpyruvate</name>
        <dbReference type="ChEBI" id="CHEBI:58702"/>
    </ligand>
</feature>
<feature type="binding site" evidence="1">
    <location>
        <position position="21"/>
    </location>
    <ligand>
        <name>3-phosphoshikimate</name>
        <dbReference type="ChEBI" id="CHEBI:145989"/>
    </ligand>
</feature>
<feature type="binding site" evidence="1">
    <location>
        <position position="25"/>
    </location>
    <ligand>
        <name>3-phosphoshikimate</name>
        <dbReference type="ChEBI" id="CHEBI:145989"/>
    </ligand>
</feature>
<feature type="binding site" evidence="1">
    <location>
        <position position="90"/>
    </location>
    <ligand>
        <name>phosphoenolpyruvate</name>
        <dbReference type="ChEBI" id="CHEBI:58702"/>
    </ligand>
</feature>
<feature type="binding site" evidence="1">
    <location>
        <position position="118"/>
    </location>
    <ligand>
        <name>phosphoenolpyruvate</name>
        <dbReference type="ChEBI" id="CHEBI:58702"/>
    </ligand>
</feature>
<feature type="binding site" evidence="1">
    <location>
        <position position="161"/>
    </location>
    <ligand>
        <name>3-phosphoshikimate</name>
        <dbReference type="ChEBI" id="CHEBI:145989"/>
    </ligand>
</feature>
<feature type="binding site" evidence="1">
    <location>
        <position position="162"/>
    </location>
    <ligand>
        <name>3-phosphoshikimate</name>
        <dbReference type="ChEBI" id="CHEBI:145989"/>
    </ligand>
</feature>
<feature type="binding site" evidence="1">
    <location>
        <position position="163"/>
    </location>
    <ligand>
        <name>3-phosphoshikimate</name>
        <dbReference type="ChEBI" id="CHEBI:145989"/>
    </ligand>
</feature>
<feature type="binding site" evidence="1">
    <location>
        <position position="163"/>
    </location>
    <ligand>
        <name>phosphoenolpyruvate</name>
        <dbReference type="ChEBI" id="CHEBI:58702"/>
    </ligand>
</feature>
<feature type="binding site" evidence="1">
    <location>
        <position position="189"/>
    </location>
    <ligand>
        <name>3-phosphoshikimate</name>
        <dbReference type="ChEBI" id="CHEBI:145989"/>
    </ligand>
</feature>
<feature type="binding site" evidence="1">
    <location>
        <position position="305"/>
    </location>
    <ligand>
        <name>3-phosphoshikimate</name>
        <dbReference type="ChEBI" id="CHEBI:145989"/>
    </ligand>
</feature>
<feature type="binding site" evidence="1">
    <location>
        <position position="332"/>
    </location>
    <ligand>
        <name>3-phosphoshikimate</name>
        <dbReference type="ChEBI" id="CHEBI:145989"/>
    </ligand>
</feature>
<feature type="binding site" evidence="1">
    <location>
        <position position="336"/>
    </location>
    <ligand>
        <name>phosphoenolpyruvate</name>
        <dbReference type="ChEBI" id="CHEBI:58702"/>
    </ligand>
</feature>
<feature type="binding site" evidence="1">
    <location>
        <position position="378"/>
    </location>
    <ligand>
        <name>phosphoenolpyruvate</name>
        <dbReference type="ChEBI" id="CHEBI:58702"/>
    </ligand>
</feature>
<gene>
    <name evidence="1" type="primary">aroA</name>
    <name type="ordered locus">Nmar_0548</name>
</gene>
<reference key="1">
    <citation type="journal article" date="2010" name="Proc. Natl. Acad. Sci. U.S.A.">
        <title>Nitrosopumilus maritimus genome reveals unique mechanisms for nitrification and autotrophy in globally distributed marine crenarchaea.</title>
        <authorList>
            <person name="Walker C.B."/>
            <person name="de la Torre J.R."/>
            <person name="Klotz M.G."/>
            <person name="Urakawa H."/>
            <person name="Pinel N."/>
            <person name="Arp D.J."/>
            <person name="Brochier-Armanet C."/>
            <person name="Chain P.S."/>
            <person name="Chan P.P."/>
            <person name="Gollabgir A."/>
            <person name="Hemp J."/>
            <person name="Hugler M."/>
            <person name="Karr E.A."/>
            <person name="Konneke M."/>
            <person name="Shin M."/>
            <person name="Lawton T.J."/>
            <person name="Lowe T."/>
            <person name="Martens-Habbena W."/>
            <person name="Sayavedra-Soto L.A."/>
            <person name="Lang D."/>
            <person name="Sievert S.M."/>
            <person name="Rosenzweig A.C."/>
            <person name="Manning G."/>
            <person name="Stahl D.A."/>
        </authorList>
    </citation>
    <scope>NUCLEOTIDE SEQUENCE [LARGE SCALE GENOMIC DNA]</scope>
    <source>
        <strain>SCM1</strain>
    </source>
</reference>
<dbReference type="EC" id="2.5.1.19" evidence="1"/>
<dbReference type="EMBL" id="CP000866">
    <property type="protein sequence ID" value="ABX12444.1"/>
    <property type="molecule type" value="Genomic_DNA"/>
</dbReference>
<dbReference type="RefSeq" id="WP_012214931.1">
    <property type="nucleotide sequence ID" value="NC_010085.1"/>
</dbReference>
<dbReference type="SMR" id="A9A231"/>
<dbReference type="FunCoup" id="A9A231">
    <property type="interactions" value="114"/>
</dbReference>
<dbReference type="STRING" id="436308.Nmar_0548"/>
<dbReference type="EnsemblBacteria" id="ABX12444">
    <property type="protein sequence ID" value="ABX12444"/>
    <property type="gene ID" value="Nmar_0548"/>
</dbReference>
<dbReference type="GeneID" id="5773778"/>
<dbReference type="KEGG" id="nmr:Nmar_0548"/>
<dbReference type="eggNOG" id="arCOG04134">
    <property type="taxonomic scope" value="Archaea"/>
</dbReference>
<dbReference type="HOGENOM" id="CLU_024321_0_0_2"/>
<dbReference type="InParanoid" id="A9A231"/>
<dbReference type="OrthoDB" id="43788at2157"/>
<dbReference type="PhylomeDB" id="A9A231"/>
<dbReference type="UniPathway" id="UPA00053"/>
<dbReference type="Proteomes" id="UP000000792">
    <property type="component" value="Chromosome"/>
</dbReference>
<dbReference type="GO" id="GO:0005737">
    <property type="term" value="C:cytoplasm"/>
    <property type="evidence" value="ECO:0007669"/>
    <property type="project" value="UniProtKB-SubCell"/>
</dbReference>
<dbReference type="GO" id="GO:0003866">
    <property type="term" value="F:3-phosphoshikimate 1-carboxyvinyltransferase activity"/>
    <property type="evidence" value="ECO:0000318"/>
    <property type="project" value="GO_Central"/>
</dbReference>
<dbReference type="GO" id="GO:0008652">
    <property type="term" value="P:amino acid biosynthetic process"/>
    <property type="evidence" value="ECO:0007669"/>
    <property type="project" value="UniProtKB-KW"/>
</dbReference>
<dbReference type="GO" id="GO:0009073">
    <property type="term" value="P:aromatic amino acid family biosynthetic process"/>
    <property type="evidence" value="ECO:0007669"/>
    <property type="project" value="UniProtKB-KW"/>
</dbReference>
<dbReference type="GO" id="GO:0009423">
    <property type="term" value="P:chorismate biosynthetic process"/>
    <property type="evidence" value="ECO:0000318"/>
    <property type="project" value="GO_Central"/>
</dbReference>
<dbReference type="CDD" id="cd01556">
    <property type="entry name" value="EPSP_synthase"/>
    <property type="match status" value="1"/>
</dbReference>
<dbReference type="FunFam" id="3.65.10.10:FF:000021">
    <property type="entry name" value="3-phosphoshikimate 1-carboxyvinyltransferase"/>
    <property type="match status" value="1"/>
</dbReference>
<dbReference type="Gene3D" id="3.65.10.10">
    <property type="entry name" value="Enolpyruvate transferase domain"/>
    <property type="match status" value="2"/>
</dbReference>
<dbReference type="HAMAP" id="MF_00210">
    <property type="entry name" value="EPSP_synth"/>
    <property type="match status" value="1"/>
</dbReference>
<dbReference type="InterPro" id="IPR001986">
    <property type="entry name" value="Enolpyruvate_Tfrase_dom"/>
</dbReference>
<dbReference type="InterPro" id="IPR036968">
    <property type="entry name" value="Enolpyruvate_Tfrase_sf"/>
</dbReference>
<dbReference type="InterPro" id="IPR006264">
    <property type="entry name" value="EPSP_synthase"/>
</dbReference>
<dbReference type="InterPro" id="IPR013792">
    <property type="entry name" value="RNA3'P_cycl/enolpyr_Trfase_a/b"/>
</dbReference>
<dbReference type="NCBIfam" id="TIGR01356">
    <property type="entry name" value="aroA"/>
    <property type="match status" value="1"/>
</dbReference>
<dbReference type="PANTHER" id="PTHR21090">
    <property type="entry name" value="AROM/DEHYDROQUINATE SYNTHASE"/>
    <property type="match status" value="1"/>
</dbReference>
<dbReference type="PANTHER" id="PTHR21090:SF5">
    <property type="entry name" value="PENTAFUNCTIONAL AROM POLYPEPTIDE"/>
    <property type="match status" value="1"/>
</dbReference>
<dbReference type="Pfam" id="PF00275">
    <property type="entry name" value="EPSP_synthase"/>
    <property type="match status" value="1"/>
</dbReference>
<dbReference type="PIRSF" id="PIRSF000505">
    <property type="entry name" value="EPSPS"/>
    <property type="match status" value="1"/>
</dbReference>
<dbReference type="SUPFAM" id="SSF55205">
    <property type="entry name" value="EPT/RTPC-like"/>
    <property type="match status" value="1"/>
</dbReference>
<organism>
    <name type="scientific">Nitrosopumilus maritimus (strain SCM1)</name>
    <dbReference type="NCBI Taxonomy" id="436308"/>
    <lineage>
        <taxon>Archaea</taxon>
        <taxon>Nitrososphaerota</taxon>
        <taxon>Nitrososphaeria</taxon>
        <taxon>Nitrosopumilales</taxon>
        <taxon>Nitrosopumilaceae</taxon>
        <taxon>Nitrosopumilus</taxon>
    </lineage>
</organism>
<name>AROA_NITMS</name>
<keyword id="KW-0028">Amino-acid biosynthesis</keyword>
<keyword id="KW-0057">Aromatic amino acid biosynthesis</keyword>
<keyword id="KW-0963">Cytoplasm</keyword>
<keyword id="KW-1185">Reference proteome</keyword>
<keyword id="KW-0808">Transferase</keyword>
<accession>A9A231</accession>
<comment type="function">
    <text evidence="1">Catalyzes the transfer of the enolpyruvyl moiety of phosphoenolpyruvate (PEP) to the 5-hydroxyl of shikimate-3-phosphate (S3P) to produce enolpyruvyl shikimate-3-phosphate and inorganic phosphate.</text>
</comment>
<comment type="catalytic activity">
    <reaction evidence="1">
        <text>3-phosphoshikimate + phosphoenolpyruvate = 5-O-(1-carboxyvinyl)-3-phosphoshikimate + phosphate</text>
        <dbReference type="Rhea" id="RHEA:21256"/>
        <dbReference type="ChEBI" id="CHEBI:43474"/>
        <dbReference type="ChEBI" id="CHEBI:57701"/>
        <dbReference type="ChEBI" id="CHEBI:58702"/>
        <dbReference type="ChEBI" id="CHEBI:145989"/>
        <dbReference type="EC" id="2.5.1.19"/>
    </reaction>
    <physiologicalReaction direction="left-to-right" evidence="1">
        <dbReference type="Rhea" id="RHEA:21257"/>
    </physiologicalReaction>
</comment>
<comment type="pathway">
    <text evidence="1">Metabolic intermediate biosynthesis; chorismate biosynthesis.</text>
</comment>
<comment type="subunit">
    <text evidence="1">Monomer.</text>
</comment>
<comment type="subcellular location">
    <subcellularLocation>
        <location evidence="1">Cytoplasm</location>
    </subcellularLocation>
</comment>
<comment type="similarity">
    <text evidence="1">Belongs to the EPSP synthase family.</text>
</comment>
<protein>
    <recommendedName>
        <fullName evidence="1">3-phosphoshikimate 1-carboxyvinyltransferase</fullName>
        <ecNumber evidence="1">2.5.1.19</ecNumber>
    </recommendedName>
    <alternativeName>
        <fullName evidence="1">5-enolpyruvylshikimate-3-phosphate synthase</fullName>
        <shortName evidence="1">EPSP synthase</shortName>
        <shortName evidence="1">EPSPS</shortName>
    </alternativeName>
</protein>
<sequence length="422" mass="45612">MKCKVEKSKISGQIVCPSNKSYTHRAIFLASLAGNGSKVENVLLSADTMATVEACKKFGASIEIENSSIIVKNPIKFDKIVPEINTENSGTTIRIASGIASLFSEEITLTGDESLQKRPMQPLLDALSSIGAQCQSTDGKPPIKITGKISGGDVTIPGNFSSQFISALLISAPLTEKGINLSIKDNLVSKPYLDATIATMRKFGVSVQTLIPYKRYNISPQVYNAATFTVPIDFSSLALLLSAAVLNGDETVIKGNIGNLPQGDEVFIDILEQLGVTVNIGEDEIKIKSPEKLKGGRFDLSNSPDLLPPLTILALNSENPIEIVNVKHARLKETDRIAITSRELVKLGIKVQENEDGLILESTENLTGAELNSENDHRLFMAFCIAGMYVGNCVVTDPESVQVSYPDFVEEMNRIGARIQPE</sequence>
<proteinExistence type="inferred from homology"/>